<reference key="1">
    <citation type="journal article" date="2004" name="Nat. Biotechnol.">
        <title>The genome sequence of the anaerobic, sulfate-reducing bacterium Desulfovibrio vulgaris Hildenborough.</title>
        <authorList>
            <person name="Heidelberg J.F."/>
            <person name="Seshadri R."/>
            <person name="Haveman S.A."/>
            <person name="Hemme C.L."/>
            <person name="Paulsen I.T."/>
            <person name="Kolonay J.F."/>
            <person name="Eisen J.A."/>
            <person name="Ward N.L."/>
            <person name="Methe B.A."/>
            <person name="Brinkac L.M."/>
            <person name="Daugherty S.C."/>
            <person name="DeBoy R.T."/>
            <person name="Dodson R.J."/>
            <person name="Durkin A.S."/>
            <person name="Madupu R."/>
            <person name="Nelson W.C."/>
            <person name="Sullivan S.A."/>
            <person name="Fouts D.E."/>
            <person name="Haft D.H."/>
            <person name="Selengut J."/>
            <person name="Peterson J.D."/>
            <person name="Davidsen T.M."/>
            <person name="Zafar N."/>
            <person name="Zhou L."/>
            <person name="Radune D."/>
            <person name="Dimitrov G."/>
            <person name="Hance M."/>
            <person name="Tran K."/>
            <person name="Khouri H.M."/>
            <person name="Gill J."/>
            <person name="Utterback T.R."/>
            <person name="Feldblyum T.V."/>
            <person name="Wall J.D."/>
            <person name="Voordouw G."/>
            <person name="Fraser C.M."/>
        </authorList>
    </citation>
    <scope>NUCLEOTIDE SEQUENCE [LARGE SCALE GENOMIC DNA]</scope>
    <source>
        <strain>ATCC 29579 / DSM 644 / CCUG 34227 / NCIMB 8303 / VKM B-1760 / Hildenborough</strain>
    </source>
</reference>
<gene>
    <name evidence="1" type="primary">tyrS</name>
    <name type="ordered locus">DVU_0953</name>
</gene>
<evidence type="ECO:0000255" key="1">
    <source>
        <dbReference type="HAMAP-Rule" id="MF_02007"/>
    </source>
</evidence>
<proteinExistence type="inferred from homology"/>
<feature type="chain" id="PRO_0000236718" description="Tyrosine--tRNA ligase">
    <location>
        <begin position="1"/>
        <end position="398"/>
    </location>
</feature>
<feature type="domain" description="S4 RNA-binding" evidence="1">
    <location>
        <begin position="341"/>
        <end position="397"/>
    </location>
</feature>
<feature type="short sequence motif" description="'HIGH' region">
    <location>
        <begin position="42"/>
        <end position="51"/>
    </location>
</feature>
<feature type="short sequence motif" description="'KMSKS' region">
    <location>
        <begin position="226"/>
        <end position="230"/>
    </location>
</feature>
<feature type="binding site" evidence="1">
    <location>
        <position position="229"/>
    </location>
    <ligand>
        <name>ATP</name>
        <dbReference type="ChEBI" id="CHEBI:30616"/>
    </ligand>
</feature>
<dbReference type="EC" id="6.1.1.1" evidence="1"/>
<dbReference type="EMBL" id="AE017285">
    <property type="protein sequence ID" value="AAS95433.1"/>
    <property type="molecule type" value="Genomic_DNA"/>
</dbReference>
<dbReference type="RefSeq" id="WP_010938252.1">
    <property type="nucleotide sequence ID" value="NC_002937.3"/>
</dbReference>
<dbReference type="RefSeq" id="YP_010174.1">
    <property type="nucleotide sequence ID" value="NC_002937.3"/>
</dbReference>
<dbReference type="SMR" id="Q72DH6"/>
<dbReference type="STRING" id="882.DVU_0953"/>
<dbReference type="PaxDb" id="882-DVU_0953"/>
<dbReference type="EnsemblBacteria" id="AAS95433">
    <property type="protein sequence ID" value="AAS95433"/>
    <property type="gene ID" value="DVU_0953"/>
</dbReference>
<dbReference type="KEGG" id="dvu:DVU_0953"/>
<dbReference type="PATRIC" id="fig|882.5.peg.897"/>
<dbReference type="eggNOG" id="COG0162">
    <property type="taxonomic scope" value="Bacteria"/>
</dbReference>
<dbReference type="HOGENOM" id="CLU_024003_5_0_7"/>
<dbReference type="OrthoDB" id="9804243at2"/>
<dbReference type="PhylomeDB" id="Q72DH6"/>
<dbReference type="Proteomes" id="UP000002194">
    <property type="component" value="Chromosome"/>
</dbReference>
<dbReference type="GO" id="GO:0005829">
    <property type="term" value="C:cytosol"/>
    <property type="evidence" value="ECO:0007669"/>
    <property type="project" value="TreeGrafter"/>
</dbReference>
<dbReference type="GO" id="GO:0005524">
    <property type="term" value="F:ATP binding"/>
    <property type="evidence" value="ECO:0007669"/>
    <property type="project" value="UniProtKB-UniRule"/>
</dbReference>
<dbReference type="GO" id="GO:0003723">
    <property type="term" value="F:RNA binding"/>
    <property type="evidence" value="ECO:0007669"/>
    <property type="project" value="UniProtKB-KW"/>
</dbReference>
<dbReference type="GO" id="GO:0004831">
    <property type="term" value="F:tyrosine-tRNA ligase activity"/>
    <property type="evidence" value="ECO:0007669"/>
    <property type="project" value="UniProtKB-UniRule"/>
</dbReference>
<dbReference type="GO" id="GO:0006437">
    <property type="term" value="P:tyrosyl-tRNA aminoacylation"/>
    <property type="evidence" value="ECO:0007669"/>
    <property type="project" value="UniProtKB-UniRule"/>
</dbReference>
<dbReference type="CDD" id="cd00165">
    <property type="entry name" value="S4"/>
    <property type="match status" value="1"/>
</dbReference>
<dbReference type="CDD" id="cd00805">
    <property type="entry name" value="TyrRS_core"/>
    <property type="match status" value="1"/>
</dbReference>
<dbReference type="FunFam" id="1.10.240.10:FF:000006">
    <property type="entry name" value="Tyrosine--tRNA ligase"/>
    <property type="match status" value="1"/>
</dbReference>
<dbReference type="FunFam" id="3.40.50.620:FF:000061">
    <property type="entry name" value="Tyrosine--tRNA ligase"/>
    <property type="match status" value="1"/>
</dbReference>
<dbReference type="Gene3D" id="3.40.50.620">
    <property type="entry name" value="HUPs"/>
    <property type="match status" value="1"/>
</dbReference>
<dbReference type="Gene3D" id="3.10.290.10">
    <property type="entry name" value="RNA-binding S4 domain"/>
    <property type="match status" value="1"/>
</dbReference>
<dbReference type="Gene3D" id="1.10.240.10">
    <property type="entry name" value="Tyrosyl-Transfer RNA Synthetase"/>
    <property type="match status" value="1"/>
</dbReference>
<dbReference type="HAMAP" id="MF_02007">
    <property type="entry name" value="Tyr_tRNA_synth_type2"/>
    <property type="match status" value="1"/>
</dbReference>
<dbReference type="InterPro" id="IPR001412">
    <property type="entry name" value="aa-tRNA-synth_I_CS"/>
</dbReference>
<dbReference type="InterPro" id="IPR002305">
    <property type="entry name" value="aa-tRNA-synth_Ic"/>
</dbReference>
<dbReference type="InterPro" id="IPR014729">
    <property type="entry name" value="Rossmann-like_a/b/a_fold"/>
</dbReference>
<dbReference type="InterPro" id="IPR002942">
    <property type="entry name" value="S4_RNA-bd"/>
</dbReference>
<dbReference type="InterPro" id="IPR036986">
    <property type="entry name" value="S4_RNA-bd_sf"/>
</dbReference>
<dbReference type="InterPro" id="IPR002307">
    <property type="entry name" value="Tyr-tRNA-ligase"/>
</dbReference>
<dbReference type="InterPro" id="IPR024088">
    <property type="entry name" value="Tyr-tRNA-ligase_bac-type"/>
</dbReference>
<dbReference type="InterPro" id="IPR024108">
    <property type="entry name" value="Tyr-tRNA-ligase_bac_2"/>
</dbReference>
<dbReference type="NCBIfam" id="TIGR00234">
    <property type="entry name" value="tyrS"/>
    <property type="match status" value="1"/>
</dbReference>
<dbReference type="PANTHER" id="PTHR11766:SF1">
    <property type="entry name" value="TYROSINE--TRNA LIGASE"/>
    <property type="match status" value="1"/>
</dbReference>
<dbReference type="PANTHER" id="PTHR11766">
    <property type="entry name" value="TYROSYL-TRNA SYNTHETASE"/>
    <property type="match status" value="1"/>
</dbReference>
<dbReference type="Pfam" id="PF01479">
    <property type="entry name" value="S4"/>
    <property type="match status" value="1"/>
</dbReference>
<dbReference type="Pfam" id="PF00579">
    <property type="entry name" value="tRNA-synt_1b"/>
    <property type="match status" value="1"/>
</dbReference>
<dbReference type="PRINTS" id="PR01040">
    <property type="entry name" value="TRNASYNTHTYR"/>
</dbReference>
<dbReference type="SMART" id="SM00363">
    <property type="entry name" value="S4"/>
    <property type="match status" value="1"/>
</dbReference>
<dbReference type="SUPFAM" id="SSF55174">
    <property type="entry name" value="Alpha-L RNA-binding motif"/>
    <property type="match status" value="1"/>
</dbReference>
<dbReference type="SUPFAM" id="SSF52374">
    <property type="entry name" value="Nucleotidylyl transferase"/>
    <property type="match status" value="1"/>
</dbReference>
<dbReference type="PROSITE" id="PS00178">
    <property type="entry name" value="AA_TRNA_LIGASE_I"/>
    <property type="match status" value="1"/>
</dbReference>
<dbReference type="PROSITE" id="PS50889">
    <property type="entry name" value="S4"/>
    <property type="match status" value="1"/>
</dbReference>
<comment type="function">
    <text evidence="1">Catalyzes the attachment of tyrosine to tRNA(Tyr) in a two-step reaction: tyrosine is first activated by ATP to form Tyr-AMP and then transferred to the acceptor end of tRNA(Tyr).</text>
</comment>
<comment type="catalytic activity">
    <reaction evidence="1">
        <text>tRNA(Tyr) + L-tyrosine + ATP = L-tyrosyl-tRNA(Tyr) + AMP + diphosphate + H(+)</text>
        <dbReference type="Rhea" id="RHEA:10220"/>
        <dbReference type="Rhea" id="RHEA-COMP:9706"/>
        <dbReference type="Rhea" id="RHEA-COMP:9707"/>
        <dbReference type="ChEBI" id="CHEBI:15378"/>
        <dbReference type="ChEBI" id="CHEBI:30616"/>
        <dbReference type="ChEBI" id="CHEBI:33019"/>
        <dbReference type="ChEBI" id="CHEBI:58315"/>
        <dbReference type="ChEBI" id="CHEBI:78442"/>
        <dbReference type="ChEBI" id="CHEBI:78536"/>
        <dbReference type="ChEBI" id="CHEBI:456215"/>
        <dbReference type="EC" id="6.1.1.1"/>
    </reaction>
</comment>
<comment type="subunit">
    <text evidence="1">Homodimer.</text>
</comment>
<comment type="subcellular location">
    <subcellularLocation>
        <location evidence="1">Cytoplasm</location>
    </subcellularLocation>
</comment>
<comment type="similarity">
    <text evidence="1">Belongs to the class-I aminoacyl-tRNA synthetase family. TyrS type 2 subfamily.</text>
</comment>
<keyword id="KW-0030">Aminoacyl-tRNA synthetase</keyword>
<keyword id="KW-0067">ATP-binding</keyword>
<keyword id="KW-0963">Cytoplasm</keyword>
<keyword id="KW-0436">Ligase</keyword>
<keyword id="KW-0547">Nucleotide-binding</keyword>
<keyword id="KW-0648">Protein biosynthesis</keyword>
<keyword id="KW-1185">Reference proteome</keyword>
<keyword id="KW-0694">RNA-binding</keyword>
<protein>
    <recommendedName>
        <fullName evidence="1">Tyrosine--tRNA ligase</fullName>
        <ecNumber evidence="1">6.1.1.1</ecNumber>
    </recommendedName>
    <alternativeName>
        <fullName evidence="1">Tyrosyl-tRNA synthetase</fullName>
        <shortName evidence="1">TyrRS</shortName>
    </alternativeName>
</protein>
<sequence>MIDIDRQLEHIKRGCAELIDEGELRKKLERGTPLRIKAGFDPTAPDLHLGHTVLIHKLRHFQELGHTVIFLIGDFTGLIGDPSGRSDTRPPLTREQVLANAETYKQQVFKILDPEKTVVDFNSRWMGEFGAADFIRLASRYTVARMMERDDFEKRYKEGRPIAVHEFLYPLVQGYDSVALKADVELGGTDQKFNLLVGRHLQSQYGQEPQCILTMPLLEGLDGVKKMSKSLGNYVGIDESPADMFGKLMSVSDELMWRYFELISSRSLDEIADLRRKVETGEAHPKLVKESLAYELTTRYHGEDKAAEAQQGFNAVFAGGGVPDDAPVHACDHGDDSTPPAFLEAAGLVKSRGEAKRLIKEGALSVDGVRCDDANSPLASGEYVIKLGKKRFLRLTVR</sequence>
<name>SYY_NITV2</name>
<accession>Q72DH6</accession>
<organism>
    <name type="scientific">Nitratidesulfovibrio vulgaris (strain ATCC 29579 / DSM 644 / CCUG 34227 / NCIMB 8303 / VKM B-1760 / Hildenborough)</name>
    <name type="common">Desulfovibrio vulgaris</name>
    <dbReference type="NCBI Taxonomy" id="882"/>
    <lineage>
        <taxon>Bacteria</taxon>
        <taxon>Pseudomonadati</taxon>
        <taxon>Thermodesulfobacteriota</taxon>
        <taxon>Desulfovibrionia</taxon>
        <taxon>Desulfovibrionales</taxon>
        <taxon>Desulfovibrionaceae</taxon>
        <taxon>Nitratidesulfovibrio</taxon>
    </lineage>
</organism>